<proteinExistence type="evidence at protein level"/>
<reference evidence="17" key="1">
    <citation type="journal article" date="1994" name="Mol. Biochem. Parasitol.">
        <title>Sequence comparison between the flavoprotein subunit of the fumarate reductase (complex II) of the anaerobic parasitic nematode, Ascaris suum and the succinate dehydrogenase of the aerobic, free-living nematode, Caenorhabditis elegans.</title>
        <authorList>
            <person name="Kuramochi T."/>
            <person name="Hirawake H."/>
            <person name="Kojima S."/>
            <person name="Takamiya S."/>
            <person name="Furushima R."/>
            <person name="Aoki T."/>
            <person name="Komuniecki R."/>
            <person name="Kita K."/>
        </authorList>
    </citation>
    <scope>NUCLEOTIDE SEQUENCE [MRNA]</scope>
    <scope>FUNCTION</scope>
    <scope>CATALYTIC ACTIVITY</scope>
    <scope>BIOPHYSICOCHEMICAL PROPERTIES</scope>
    <scope>SUBCELLULAR LOCATION</scope>
    <scope>TISSUE SPECIFICITY</scope>
</reference>
<reference evidence="16" key="2">
    <citation type="journal article" date="2011" name="Genome Res.">
        <title>Deep small RNA sequencing from the nematode Ascaris reveals conservation, functional diversification, and novel developmental profiles.</title>
        <authorList>
            <person name="Wang J."/>
            <person name="Czech B."/>
            <person name="Crunk A."/>
            <person name="Wallace A."/>
            <person name="Mitreva M."/>
            <person name="Hannon G.J."/>
            <person name="Davis R.E."/>
        </authorList>
    </citation>
    <scope>NUCLEOTIDE SEQUENCE [LARGE SCALE MRNA]</scope>
</reference>
<reference evidence="15" key="3">
    <citation type="journal article" date="1988" name="Biochim. Biophys. Acta">
        <title>Electron-transfer complexes of Ascaris suum muscle mitochondria. III. Composition and fumarate reductase activity of complex II.</title>
        <authorList>
            <person name="Kita K."/>
            <person name="Takamiya S."/>
            <person name="Furushima R."/>
            <person name="Ma Y.C."/>
            <person name="Suzuki H."/>
            <person name="Ozawa T."/>
            <person name="Oya H."/>
        </authorList>
    </citation>
    <scope>FUNCTION</scope>
    <scope>CATALYTIC ACTIVITY</scope>
    <scope>BIOPHYSICOCHEMICAL PROPERTIES</scope>
    <scope>IDENTIFICATION IN THE MITOCHONDRIAL RESPIRATORY CHAIN COMPLEX II</scope>
    <scope>SUBCELLULAR LOCATION</scope>
    <scope>TISSUE SPECIFICITY</scope>
</reference>
<reference evidence="15" key="4">
    <citation type="journal article" date="1993" name="Biochim. Biophys. Acta">
        <title>Developmental changes in the respiratory chain of Ascaris mitochondria.</title>
        <authorList>
            <person name="Takamiya S."/>
            <person name="Kita K."/>
            <person name="Wang H."/>
            <person name="Weinstein P.P."/>
            <person name="Hiraishi A."/>
            <person name="Oya H."/>
            <person name="Aoki T."/>
        </authorList>
    </citation>
    <scope>FUNCTION</scope>
    <scope>CATALYTIC ACTIVITY</scope>
    <scope>BIOPHYSICOCHEMICAL PROPERTIES</scope>
    <scope>IDENTIFICATION IN THE MITOCHONDRIAL RESPIRATORY CHAIN COMPLEX II</scope>
    <scope>SUBCELLULAR LOCATION</scope>
    <scope>TISSUE SPECIFICITY</scope>
</reference>
<reference evidence="15" key="5">
    <citation type="journal article" date="1995" name="J. Biol. Chem.">
        <title>Stage-specific isoforms of complex II (succinate-ubiquinone oxidoreductase) in mitochondria from the parasitic nematode, Ascaris suum.</title>
        <authorList>
            <person name="Saruta F."/>
            <person name="Kuramochi T."/>
            <person name="Nakamura K."/>
            <person name="Takamiya S."/>
            <person name="Yu Y."/>
            <person name="Aoki T."/>
            <person name="Sekimizu K."/>
            <person name="Kojima S."/>
            <person name="Kita K."/>
        </authorList>
    </citation>
    <scope>FUNCTION</scope>
    <scope>CATALYTIC ACTIVITY</scope>
    <scope>BIOPHYSICOCHEMICAL PROPERTIES</scope>
    <scope>IDENTIFICATION IN THE MITOCHONDRIAL RESPIRATORY CHAIN COMPLEX II</scope>
    <scope>SUBCELLULAR LOCATION</scope>
    <scope>TISSUE SPECIFICITY</scope>
</reference>
<reference evidence="15" key="6">
    <citation type="journal article" date="2003" name="Mol. Biochem. Parasitol.">
        <title>Isolation and characterization of the stage-specific cytochrome b small subunit (CybS) of Ascaris suum complex II from the aerobic respiratory chain of larval mitochondria.</title>
        <authorList>
            <person name="Amino H."/>
            <person name="Osanai A."/>
            <person name="Miyadera H."/>
            <person name="Shinjyo N."/>
            <person name="Tomitsuka E."/>
            <person name="Taka H."/>
            <person name="Mineki R."/>
            <person name="Murayama K."/>
            <person name="Takamiya S."/>
            <person name="Aoki T."/>
            <person name="Miyoshi H."/>
            <person name="Sakamoto K."/>
            <person name="Kojima S."/>
            <person name="Kita K."/>
        </authorList>
    </citation>
    <scope>FUNCTION</scope>
    <scope>CATALYTIC ACTIVITY</scope>
    <scope>BIOPHYSICOCHEMICAL PROPERTIES</scope>
    <scope>IDENTIFICATION IN THE MITOCHONDRIAL RESPIRATORY CHAIN COMPLEX II</scope>
    <scope>SUBCELLULAR LOCATION</scope>
    <scope>TISSUE SPECIFICITY</scope>
</reference>
<reference evidence="15" key="7">
    <citation type="journal article" date="2008" name="Parasitol. Int.">
        <title>Change of subunit composition of mitochondrial complex II (succinate-ubiquinone reductase/quinol-fumarate reductase) in Ascaris suum during the migration in the experimental host.</title>
        <authorList>
            <person name="Iwata F."/>
            <person name="Shinjyo N."/>
            <person name="Amino H."/>
            <person name="Sakamoto K."/>
            <person name="Islam M.K."/>
            <person name="Tsuji N."/>
            <person name="Kita K."/>
        </authorList>
    </citation>
    <scope>FUNCTION</scope>
    <scope>CATALYTIC ACTIVITY</scope>
    <scope>IDENTIFICATION IN THE MITOCHONDRIAL RESPIRATORY CHAIN COMPLEX II</scope>
    <scope>SUBCELLULAR LOCATION</scope>
    <scope>TISSUE SPECIFICITY</scope>
    <scope>DEVELOPMENTAL STAGE</scope>
</reference>
<reference evidence="18 19 20 21" key="8">
    <citation type="journal article" date="2012" name="J. Biochem.">
        <title>Crystal structure of mitochondrial quinol-fumarate reductase from the parasitic nematode Ascaris suum.</title>
        <authorList>
            <person name="Shimizu H."/>
            <person name="Osanai A."/>
            <person name="Sakamoto K."/>
            <person name="Inaoka D.K."/>
            <person name="Shiba T."/>
            <person name="Harada S."/>
            <person name="Kita K."/>
        </authorList>
    </citation>
    <scope>X-RAY CRYSTALLOGRAPHY (2.81 ANGSTROMS) IN COMPLEX WITH FAD; FUMARATE; IP; CYBL AND CYBS</scope>
    <scope>COFACTOR</scope>
    <scope>IDENTIFICATION IN THE MITOCHONDRIAL RESPIRATORY CHAIN COMPLEX II</scope>
    <scope>SUBCELLULAR LOCATION</scope>
    <scope>TISSUE SPECIFICITY</scope>
</reference>
<reference evidence="22 23 24 25 26 27 28 29" key="9">
    <citation type="journal article" date="2015" name="Int. J. Mol. Sci.">
        <title>Structural Insights into the Molecular Design of Flutolanil Derivatives Targeted for Fumarate Respiration of Parasite Mitochondria.</title>
        <authorList>
            <person name="Inaoka D.K."/>
            <person name="Shiba T."/>
            <person name="Sato D."/>
            <person name="Balogun E.O."/>
            <person name="Sasaki T."/>
            <person name="Nagahama M."/>
            <person name="Oda M."/>
            <person name="Matsuoka S."/>
            <person name="Ohmori J."/>
            <person name="Honma T."/>
            <person name="Inoue M."/>
            <person name="Kita K."/>
            <person name="Harada S."/>
        </authorList>
    </citation>
    <scope>X-RAY CRYSTALLOGRAPHY (2.25 ANGSTROMS) IN COMPLEX WITH FAD; SUCCINATE ANOLOG; IP; CYBS AND CYBL</scope>
    <scope>CATALYTIC ACTIVITY</scope>
    <scope>ACTIVITY REGULATION</scope>
    <scope>COFACTOR</scope>
    <scope>IDENTIFICATION IN THE MITOCHONDRIAL RESPIRATORY CHAIN COMPLEX II</scope>
    <scope>SUBCELLULAR LOCATION</scope>
    <scope>TISSUE SPECIFICITY</scope>
</reference>
<organism evidence="17">
    <name type="scientific">Ascaris suum</name>
    <name type="common">Pig roundworm</name>
    <name type="synonym">Ascaris lumbricoides</name>
    <dbReference type="NCBI Taxonomy" id="6253"/>
    <lineage>
        <taxon>Eukaryota</taxon>
        <taxon>Metazoa</taxon>
        <taxon>Ecdysozoa</taxon>
        <taxon>Nematoda</taxon>
        <taxon>Chromadorea</taxon>
        <taxon>Rhabditida</taxon>
        <taxon>Spirurina</taxon>
        <taxon>Ascaridomorpha</taxon>
        <taxon>Ascaridoidea</taxon>
        <taxon>Ascarididae</taxon>
        <taxon>Ascaris</taxon>
    </lineage>
</organism>
<sequence length="645" mass="71201">MLRAVRALICRIGARRTLSVSSSRLDVSTSNIAQYKVIDHAYDVVIIGAGGAGLRAAMGLGEAGFKTAVVTKMFPTRSHTTAAQGGINAALGSMNPDDWKWHFYDTAKGSDWLGDQNAMHYLTRNAVEAVTELENFGMPFSRTPEGKIYQRSFGGQSNNYGKGGVAKRTCCVADRTGHSMLHTLYGNSLRCHCTFFIEYFALDLLMDKGRCVGVIALCLEDGTIHRFRSKRTIVATGGYGRAYFSCTTAHMNTGDGTALATRAGIALEDLEFIQFHPTGIYGVGCLITEGSRGEGGFLVNSEGERFMERYAPKAKDLASRDVVSRAETIEIMEGRGVGPEKDHIYLQLHHLPAEQLHQRLPGISETAKIFAGVDVTKEPIPVIPTVHYNMGGIPTNYKAQVIKYTKEGGDKIVPGLYACGECACHSVHGANRLGANSLLDAVVFGRACSINIKEELKPDEKIPELPEGAGEESIANLDAVRYANGDVPTAELRLTMQKTMQKHAGVFRRGDILAEGVKKMMDLSKELKRLKTTDRSLIWNSDLTESLELQNLMLNATQTIVAAENRKESRGAHARDDFPKREDEYDYSKPIEGQTKRPFEKHWRKHTLTKQDPRTGHITLDYRPVIDKTLDPAEVDWIPPIIRSY</sequence>
<gene>
    <name evidence="13" type="primary">SDHA1</name>
</gene>
<name>SDHA1_ASCSU</name>
<comment type="function">
    <text evidence="5 6 9 10 11 12">Flavoprotein (Fp) subunit of the mitochondrial electron transport chain complex II which, together with the iron-sulfur protein (Ip) subunit forms the catalytic core of the complex (PubMed:12742584, PubMed:17933581, PubMed:2843227, PubMed:7739664, PubMed:7822332, PubMed:8435436). During the parasitic larvae and adult stages, which occur in an anaerobic environment, acts as a fumarate reductase by transferring electrons from rhodoquinol to fumarate (PubMed:12742584, PubMed:17933581, PubMed:2843227, PubMed:7739664, PubMed:7822332, PubMed:8435436).</text>
</comment>
<comment type="catalytic activity">
    <reaction evidence="5 6 9 11 12">
        <text>a rhodoquinone + succinate = a rhodoquinol + fumarate</text>
        <dbReference type="Rhea" id="RHEA:75711"/>
        <dbReference type="Rhea" id="RHEA-COMP:18569"/>
        <dbReference type="Rhea" id="RHEA-COMP:18570"/>
        <dbReference type="ChEBI" id="CHEBI:29806"/>
        <dbReference type="ChEBI" id="CHEBI:30031"/>
        <dbReference type="ChEBI" id="CHEBI:194432"/>
        <dbReference type="ChEBI" id="CHEBI:194433"/>
        <dbReference type="EC" id="1.3.5.1"/>
    </reaction>
    <physiologicalReaction direction="right-to-left" evidence="5 6 9 11 12">
        <dbReference type="Rhea" id="RHEA:75713"/>
    </physiologicalReaction>
</comment>
<comment type="cofactor">
    <cofactor evidence="4">
        <name>FAD</name>
        <dbReference type="ChEBI" id="CHEBI:57692"/>
    </cofactor>
    <text evidence="7 8">Binds 1 FAD covalently per subunit.</text>
</comment>
<comment type="activity regulation">
    <text evidence="8">Inhibited by the fungicide flutolanil.</text>
</comment>
<comment type="biophysicochemical properties">
    <kinetics>
        <KM evidence="9">3.09 mM for fumarate (adult complex II, at 25 degrees Celsius and in anaerobic conditions)</KM>
        <KM evidence="12">31 uM for fumarate (adult complex II, at 25 degrees Celsius)</KM>
        <KM evidence="12">150 uM for fumarate (free larvae complex II, at 25 degrees Celsius)</KM>
        <KM evidence="10">0.4 mM for succinate (at 37 degrees Celsius)</KM>
        <KM evidence="11">608 uM for succinate (adult complex II, at 25 degrees Celsius)</KM>
        <KM evidence="11">3 uM for ubquinone-1 (adult complex II, succinate as cosubstrate and at 25 degrees Celsius)</KM>
        <KM evidence="11">143 uM for fumarate (adult complex II, at 25 degrees Celsius)</KM>
        <KM evidence="5">16.6 uM for fumarate (adult complex II, n-decyl-rhodoquinol as cosubstrate)</KM>
        <KM evidence="5">40.6 uM for n-decyl-rhodoquinol (free larvae complex II, fumarate as cosubstrate)</KM>
        <KM evidence="5">625 uM for succinate (adult complex II, n-decyl-ubiquinone as cosubstrate)</KM>
        <KM evidence="5">11.4 uM for n-decyl-ubiquinone (adult complex II, succinate as cosubstrate)</KM>
        <Vmax evidence="9">49.0 umol/min/mg enzyme toward fumarate (adult complex II, at 25 degrees Celsius and in anaerobic conditions)</Vmax>
        <Vmax evidence="10">418.0 nmol/min/mg enzyme towards succinate (at 37 degrees Celsius)</Vmax>
        <Vmax evidence="5">0.89 umol/min/mg enzyme toward fumarate (adult complex II, n-decyl-rhodoquinol as cosubstrate)</Vmax>
        <Vmax evidence="5">1.39 umol/min/mg enzyme toward succinate (adult complex II, n-decyl-ubiquinone as cosubstrate)</Vmax>
        <text evidence="9">kcat is 6000 min(-1) with fumarate as substrate (adult complex II, at 25 degrees Celsius and in anaerobic conditions).</text>
    </kinetics>
    <phDependence>
        <text evidence="9">Optimum pH is 7.5.</text>
    </phDependence>
</comment>
<comment type="subunit">
    <text evidence="5 6 7 8 9 11 12">Component of the mitochondrial electron transport chain complex II composed of four subunits: a flavoprotein (Fp), an iron-sulfur protein (Ip), and a large cytochrome b (CybL) subunit and a small cytochrome b (CybS) subunit (PubMed:12742584, PubMed:17933581, PubMed:22577165, PubMed:26198225, PubMed:2843227, PubMed:7822332, PubMed:8435436). There are 2 developmental stage-specific forms of complex II which have the Ip and CybL subunits in common (PubMed:12742584, PubMed:17933581, PubMed:22577165, PubMed:26198225, PubMed:2843227, PubMed:7822332, PubMed:8435436). Complex II from the free-living larvae (aerobic environment) acts as a succinate dehydrogenase and is composed of the common subunit Ip and CybL and the stage specific subunits FpL and CybSL (PubMed:12742584, PubMed:17933581, PubMed:7822332). Complex II from parasitic larvae and adults (anaerobic environment) acts as a fumarate reductase and is composed of the common subunit Ip and CybL and the stage specific subunits FpA and CybSA (PubMed:12742584, PubMed:17933581, PubMed:7822332).</text>
</comment>
<comment type="subcellular location">
    <subcellularLocation>
        <location evidence="4 5 6 7 8 9 10 11 12">Mitochondrion inner membrane</location>
        <topology evidence="4">Peripheral membrane protein</topology>
        <orientation evidence="4">Matrix side</orientation>
    </subcellularLocation>
</comment>
<comment type="tissue specificity">
    <text evidence="5 6 7 8 9 10 11 12">Expressed in adult muscles (at protein level).</text>
</comment>
<comment type="developmental stage">
    <text evidence="6">Expressed in host lung L3 larvae (at protein level).</text>
</comment>
<comment type="similarity">
    <text evidence="4">Belongs to the FAD-dependent oxidoreductase 2 family. FRD/SDH subfamily.</text>
</comment>
<protein>
    <recommendedName>
        <fullName evidence="15">Succinate dehydrogenase [rhodoquinone] flavoprotein subunit 1, mitochondrial</fullName>
        <ecNumber evidence="5 6 8 9 10 11 12">1.3.5.1</ecNumber>
    </recommendedName>
    <alternativeName>
        <fullName evidence="15">Fumarate reductase flavoprotein subunit, mitochondrial</fullName>
        <shortName evidence="14">FpA</shortName>
    </alternativeName>
</protein>
<accession>Q33862</accession>
<accession>F1KV78</accession>
<evidence type="ECO:0000255" key="1"/>
<evidence type="ECO:0000255" key="2">
    <source>
        <dbReference type="PIRSR" id="PIRSR611281-1"/>
    </source>
</evidence>
<evidence type="ECO:0000255" key="3">
    <source>
        <dbReference type="PIRSR" id="PIRSR611281-4"/>
    </source>
</evidence>
<evidence type="ECO:0000255" key="4">
    <source>
        <dbReference type="RuleBase" id="RU362051"/>
    </source>
</evidence>
<evidence type="ECO:0000269" key="5">
    <source>
    </source>
</evidence>
<evidence type="ECO:0000269" key="6">
    <source>
    </source>
</evidence>
<evidence type="ECO:0000269" key="7">
    <source>
    </source>
</evidence>
<evidence type="ECO:0000269" key="8">
    <source>
    </source>
</evidence>
<evidence type="ECO:0000269" key="9">
    <source>
    </source>
</evidence>
<evidence type="ECO:0000269" key="10">
    <source>
    </source>
</evidence>
<evidence type="ECO:0000269" key="11">
    <source>
    </source>
</evidence>
<evidence type="ECO:0000269" key="12">
    <source>
    </source>
</evidence>
<evidence type="ECO:0000303" key="13">
    <source>
    </source>
</evidence>
<evidence type="ECO:0000303" key="14">
    <source>
    </source>
</evidence>
<evidence type="ECO:0000305" key="15"/>
<evidence type="ECO:0000312" key="16">
    <source>
        <dbReference type="EMBL" id="ADY41782.1"/>
    </source>
</evidence>
<evidence type="ECO:0000312" key="17">
    <source>
        <dbReference type="EMBL" id="BAA21636.1"/>
    </source>
</evidence>
<evidence type="ECO:0007744" key="18">
    <source>
        <dbReference type="PDB" id="3VR8"/>
    </source>
</evidence>
<evidence type="ECO:0007744" key="19">
    <source>
        <dbReference type="PDB" id="3VR9"/>
    </source>
</evidence>
<evidence type="ECO:0007744" key="20">
    <source>
        <dbReference type="PDB" id="3VRA"/>
    </source>
</evidence>
<evidence type="ECO:0007744" key="21">
    <source>
        <dbReference type="PDB" id="3VRB"/>
    </source>
</evidence>
<evidence type="ECO:0007744" key="22">
    <source>
        <dbReference type="PDB" id="4YSX"/>
    </source>
</evidence>
<evidence type="ECO:0007744" key="23">
    <source>
        <dbReference type="PDB" id="4YSY"/>
    </source>
</evidence>
<evidence type="ECO:0007744" key="24">
    <source>
        <dbReference type="PDB" id="4YSZ"/>
    </source>
</evidence>
<evidence type="ECO:0007744" key="25">
    <source>
        <dbReference type="PDB" id="4YT0"/>
    </source>
</evidence>
<evidence type="ECO:0007744" key="26">
    <source>
        <dbReference type="PDB" id="4YTM"/>
    </source>
</evidence>
<evidence type="ECO:0007744" key="27">
    <source>
        <dbReference type="PDB" id="4YTN"/>
    </source>
</evidence>
<evidence type="ECO:0007744" key="28">
    <source>
        <dbReference type="PDB" id="5C2T"/>
    </source>
</evidence>
<evidence type="ECO:0007744" key="29">
    <source>
        <dbReference type="PDB" id="5C3J"/>
    </source>
</evidence>
<evidence type="ECO:0007829" key="30">
    <source>
        <dbReference type="PDB" id="3VR8"/>
    </source>
</evidence>
<evidence type="ECO:0007829" key="31">
    <source>
        <dbReference type="PDB" id="3VRA"/>
    </source>
</evidence>
<evidence type="ECO:0007829" key="32">
    <source>
        <dbReference type="PDB" id="3VRB"/>
    </source>
</evidence>
<evidence type="ECO:0007829" key="33">
    <source>
        <dbReference type="PDB" id="4YSX"/>
    </source>
</evidence>
<evidence type="ECO:0007829" key="34">
    <source>
        <dbReference type="PDB" id="4YSY"/>
    </source>
</evidence>
<evidence type="ECO:0007829" key="35">
    <source>
        <dbReference type="PDB" id="4YSZ"/>
    </source>
</evidence>
<evidence type="ECO:0007829" key="36">
    <source>
        <dbReference type="PDB" id="5C3J"/>
    </source>
</evidence>
<dbReference type="EC" id="1.3.5.1" evidence="5 6 8 9 10 11 12"/>
<dbReference type="EMBL" id="D30650">
    <property type="protein sequence ID" value="BAA21636.1"/>
    <property type="molecule type" value="mRNA"/>
</dbReference>
<dbReference type="EMBL" id="JI166437">
    <property type="protein sequence ID" value="ADY41782.1"/>
    <property type="molecule type" value="mRNA"/>
</dbReference>
<dbReference type="PDB" id="3VR8">
    <property type="method" value="X-ray"/>
    <property type="resolution" value="2.81 A"/>
    <property type="chains" value="A/E=1-645"/>
</dbReference>
<dbReference type="PDB" id="3VR9">
    <property type="method" value="X-ray"/>
    <property type="resolution" value="3.01 A"/>
    <property type="chains" value="A/E=1-645"/>
</dbReference>
<dbReference type="PDB" id="3VRA">
    <property type="method" value="X-ray"/>
    <property type="resolution" value="3.44 A"/>
    <property type="chains" value="A/E=1-645"/>
</dbReference>
<dbReference type="PDB" id="3VRB">
    <property type="method" value="X-ray"/>
    <property type="resolution" value="2.91 A"/>
    <property type="chains" value="A/E=1-645"/>
</dbReference>
<dbReference type="PDB" id="4YSX">
    <property type="method" value="X-ray"/>
    <property type="resolution" value="2.25 A"/>
    <property type="chains" value="A/E=1-645"/>
</dbReference>
<dbReference type="PDB" id="4YSY">
    <property type="method" value="X-ray"/>
    <property type="resolution" value="3.10 A"/>
    <property type="chains" value="A/E=1-645"/>
</dbReference>
<dbReference type="PDB" id="4YSZ">
    <property type="method" value="X-ray"/>
    <property type="resolution" value="3.30 A"/>
    <property type="chains" value="A/E=1-645"/>
</dbReference>
<dbReference type="PDB" id="4YT0">
    <property type="method" value="X-ray"/>
    <property type="resolution" value="3.66 A"/>
    <property type="chains" value="A/E=1-645"/>
</dbReference>
<dbReference type="PDB" id="4YTM">
    <property type="method" value="X-ray"/>
    <property type="resolution" value="3.40 A"/>
    <property type="chains" value="A/E=1-645"/>
</dbReference>
<dbReference type="PDB" id="4YTN">
    <property type="method" value="X-ray"/>
    <property type="resolution" value="3.00 A"/>
    <property type="chains" value="A/E=1-645"/>
</dbReference>
<dbReference type="PDB" id="5C2T">
    <property type="method" value="X-ray"/>
    <property type="resolution" value="2.75 A"/>
    <property type="chains" value="A/E=1-645"/>
</dbReference>
<dbReference type="PDB" id="5C3J">
    <property type="method" value="X-ray"/>
    <property type="resolution" value="2.80 A"/>
    <property type="chains" value="A/E=1-645"/>
</dbReference>
<dbReference type="PDBsum" id="3VR8"/>
<dbReference type="PDBsum" id="3VR9"/>
<dbReference type="PDBsum" id="3VRA"/>
<dbReference type="PDBsum" id="3VRB"/>
<dbReference type="PDBsum" id="4YSX"/>
<dbReference type="PDBsum" id="4YSY"/>
<dbReference type="PDBsum" id="4YSZ"/>
<dbReference type="PDBsum" id="4YT0"/>
<dbReference type="PDBsum" id="4YTM"/>
<dbReference type="PDBsum" id="4YTN"/>
<dbReference type="PDBsum" id="5C2T"/>
<dbReference type="PDBsum" id="5C3J"/>
<dbReference type="SMR" id="Q33862"/>
<dbReference type="BioCyc" id="MetaCyc:MONOMER-18284"/>
<dbReference type="EvolutionaryTrace" id="Q33862"/>
<dbReference type="GO" id="GO:0005743">
    <property type="term" value="C:mitochondrial inner membrane"/>
    <property type="evidence" value="ECO:0007669"/>
    <property type="project" value="UniProtKB-SubCell"/>
</dbReference>
<dbReference type="GO" id="GO:0031966">
    <property type="term" value="C:mitochondrial membrane"/>
    <property type="evidence" value="ECO:0000314"/>
    <property type="project" value="UniProtKB"/>
</dbReference>
<dbReference type="GO" id="GO:0005739">
    <property type="term" value="C:mitochondrion"/>
    <property type="evidence" value="ECO:0000314"/>
    <property type="project" value="UniProtKB"/>
</dbReference>
<dbReference type="GO" id="GO:0045273">
    <property type="term" value="C:respiratory chain complex II (succinate dehydrogenase)"/>
    <property type="evidence" value="ECO:0000314"/>
    <property type="project" value="UniProtKB"/>
</dbReference>
<dbReference type="GO" id="GO:0009055">
    <property type="term" value="F:electron transfer activity"/>
    <property type="evidence" value="ECO:0007669"/>
    <property type="project" value="TreeGrafter"/>
</dbReference>
<dbReference type="GO" id="GO:0050660">
    <property type="term" value="F:flavin adenine dinucleotide binding"/>
    <property type="evidence" value="ECO:0000314"/>
    <property type="project" value="UniProtKB"/>
</dbReference>
<dbReference type="GO" id="GO:0008177">
    <property type="term" value="F:succinate dehydrogenase (quinone) activity"/>
    <property type="evidence" value="ECO:0000314"/>
    <property type="project" value="UniProtKB"/>
</dbReference>
<dbReference type="GO" id="GO:0006121">
    <property type="term" value="P:mitochondrial electron transport, succinate to ubiquinone"/>
    <property type="evidence" value="ECO:0007669"/>
    <property type="project" value="TreeGrafter"/>
</dbReference>
<dbReference type="GO" id="GO:0006099">
    <property type="term" value="P:tricarboxylic acid cycle"/>
    <property type="evidence" value="ECO:0007669"/>
    <property type="project" value="InterPro"/>
</dbReference>
<dbReference type="FunFam" id="3.90.700.10:FF:000001">
    <property type="entry name" value="Mitochondrial succinate dehydrogenase flavoprotein subunit"/>
    <property type="match status" value="1"/>
</dbReference>
<dbReference type="FunFam" id="4.10.80.40:FF:000004">
    <property type="entry name" value="Succinate dehydrogenase [ubiquinone] flavoprotein subunit, mitochondrial"/>
    <property type="match status" value="1"/>
</dbReference>
<dbReference type="FunFam" id="3.50.50.60:FF:001062">
    <property type="entry name" value="Succinate dehydrogenase complex, subunit A, flavoprotein (Fp)"/>
    <property type="match status" value="1"/>
</dbReference>
<dbReference type="FunFam" id="3.50.50.60:FF:000026">
    <property type="entry name" value="Succinate dehydrogenase flavoprotein subunit"/>
    <property type="match status" value="1"/>
</dbReference>
<dbReference type="FunFam" id="1.20.58.100:FF:000001">
    <property type="entry name" value="Succinate dehydrogenase flavoprotein subunit (SdhA)"/>
    <property type="match status" value="1"/>
</dbReference>
<dbReference type="Gene3D" id="3.50.50.60">
    <property type="entry name" value="FAD/NAD(P)-binding domain"/>
    <property type="match status" value="1"/>
</dbReference>
<dbReference type="Gene3D" id="1.20.58.100">
    <property type="entry name" value="Fumarate reductase/succinate dehydrogenase flavoprotein-like, C-terminal domain"/>
    <property type="match status" value="1"/>
</dbReference>
<dbReference type="Gene3D" id="4.10.80.40">
    <property type="entry name" value="succinate dehydrogenase protein domain"/>
    <property type="match status" value="1"/>
</dbReference>
<dbReference type="Gene3D" id="3.90.700.10">
    <property type="entry name" value="Succinate dehydrogenase/fumarate reductase flavoprotein, catalytic domain"/>
    <property type="match status" value="1"/>
</dbReference>
<dbReference type="InterPro" id="IPR003953">
    <property type="entry name" value="FAD-dep_OxRdtase_2_FAD-bd"/>
</dbReference>
<dbReference type="InterPro" id="IPR036188">
    <property type="entry name" value="FAD/NAD-bd_sf"/>
</dbReference>
<dbReference type="InterPro" id="IPR003952">
    <property type="entry name" value="FRD_SDH_FAD_BS"/>
</dbReference>
<dbReference type="InterPro" id="IPR037099">
    <property type="entry name" value="Fum_R/Succ_DH_flav-like_C_sf"/>
</dbReference>
<dbReference type="InterPro" id="IPR015939">
    <property type="entry name" value="Fum_Rdtase/Succ_DH_flav-like_C"/>
</dbReference>
<dbReference type="InterPro" id="IPR030664">
    <property type="entry name" value="SdhA/FrdA/AprA"/>
</dbReference>
<dbReference type="InterPro" id="IPR027477">
    <property type="entry name" value="Succ_DH/fumarate_Rdtase_cat_sf"/>
</dbReference>
<dbReference type="InterPro" id="IPR011281">
    <property type="entry name" value="Succ_DH_flav_su_fwd"/>
</dbReference>
<dbReference type="InterPro" id="IPR014006">
    <property type="entry name" value="Succ_Dhase_FrdA_Gneg"/>
</dbReference>
<dbReference type="NCBIfam" id="TIGR01816">
    <property type="entry name" value="sdhA_forward"/>
    <property type="match status" value="1"/>
</dbReference>
<dbReference type="NCBIfam" id="TIGR01812">
    <property type="entry name" value="sdhA_frdA_Gneg"/>
    <property type="match status" value="1"/>
</dbReference>
<dbReference type="PANTHER" id="PTHR11632">
    <property type="entry name" value="SUCCINATE DEHYDROGENASE 2 FLAVOPROTEIN SUBUNIT"/>
    <property type="match status" value="1"/>
</dbReference>
<dbReference type="PANTHER" id="PTHR11632:SF51">
    <property type="entry name" value="SUCCINATE DEHYDROGENASE [UBIQUINONE] FLAVOPROTEIN SUBUNIT, MITOCHONDRIAL"/>
    <property type="match status" value="1"/>
</dbReference>
<dbReference type="Pfam" id="PF00890">
    <property type="entry name" value="FAD_binding_2"/>
    <property type="match status" value="1"/>
</dbReference>
<dbReference type="Pfam" id="PF02910">
    <property type="entry name" value="Succ_DH_flav_C"/>
    <property type="match status" value="1"/>
</dbReference>
<dbReference type="PIRSF" id="PIRSF000171">
    <property type="entry name" value="SDHA_APRA_LASPO"/>
    <property type="match status" value="1"/>
</dbReference>
<dbReference type="PRINTS" id="PR00411">
    <property type="entry name" value="PNDRDTASEI"/>
</dbReference>
<dbReference type="SUPFAM" id="SSF51905">
    <property type="entry name" value="FAD/NAD(P)-binding domain"/>
    <property type="match status" value="1"/>
</dbReference>
<dbReference type="SUPFAM" id="SSF46977">
    <property type="entry name" value="Succinate dehydrogenase/fumarate reductase flavoprotein C-terminal domain"/>
    <property type="match status" value="1"/>
</dbReference>
<dbReference type="SUPFAM" id="SSF56425">
    <property type="entry name" value="Succinate dehydrogenase/fumarate reductase flavoprotein, catalytic domain"/>
    <property type="match status" value="1"/>
</dbReference>
<dbReference type="PROSITE" id="PS00504">
    <property type="entry name" value="FRD_SDH_FAD_BINDING"/>
    <property type="match status" value="1"/>
</dbReference>
<feature type="transit peptide" description="Mitochondrion" evidence="1">
    <location>
        <begin position="1"/>
        <end position="18"/>
    </location>
</feature>
<feature type="chain" id="PRO_0000458184" description="Succinate dehydrogenase [rhodoquinone] flavoprotein subunit 1, mitochondrial" evidence="1">
    <location>
        <begin position="19"/>
        <end position="645"/>
    </location>
</feature>
<feature type="active site" description="Proton acceptor" evidence="2">
    <location>
        <position position="320"/>
    </location>
</feature>
<feature type="binding site" evidence="7 8 18 19 20 21 22 23 24 25 26 27 28 29">
    <location>
        <position position="49"/>
    </location>
    <ligand>
        <name>FAD</name>
        <dbReference type="ChEBI" id="CHEBI:57692"/>
    </ligand>
</feature>
<feature type="binding site" evidence="7 8 18 20 22 23 24 25 26 27 28 29">
    <location>
        <position position="52"/>
    </location>
    <ligand>
        <name>FAD</name>
        <dbReference type="ChEBI" id="CHEBI:57692"/>
    </ligand>
</feature>
<feature type="binding site" evidence="7 8 18 19 20 21 22 23 24 25 26 27 28 29">
    <location>
        <position position="71"/>
    </location>
    <ligand>
        <name>FAD</name>
        <dbReference type="ChEBI" id="CHEBI:57692"/>
    </ligand>
</feature>
<feature type="binding site" evidence="7 8 18 19 21 22 23 25">
    <location>
        <position position="72"/>
    </location>
    <ligand>
        <name>FAD</name>
        <dbReference type="ChEBI" id="CHEBI:57692"/>
    </ligand>
</feature>
<feature type="binding site" evidence="7 8 18 19 20 21 22 23 24 25 26 27 28 29">
    <location>
        <position position="78"/>
    </location>
    <ligand>
        <name>FAD</name>
        <dbReference type="ChEBI" id="CHEBI:57692"/>
    </ligand>
</feature>
<feature type="binding site" evidence="7 8 18 19 20 21 22 23 24 25 26 27 28 29">
    <location>
        <position position="80"/>
    </location>
    <ligand>
        <name>FAD</name>
        <dbReference type="ChEBI" id="CHEBI:57692"/>
    </ligand>
</feature>
<feature type="binding site" evidence="7 8 18 19 20 21 22 23 24 25 27 28">
    <location>
        <position position="84"/>
    </location>
    <ligand>
        <name>FAD</name>
        <dbReference type="ChEBI" id="CHEBI:57692"/>
    </ligand>
</feature>
<feature type="binding site" evidence="7 8 18 19 20 21 22 23 24 25 26 27 28 29">
    <location>
        <position position="85"/>
    </location>
    <ligand>
        <name>FAD</name>
        <dbReference type="ChEBI" id="CHEBI:57692"/>
    </ligand>
</feature>
<feature type="binding site" evidence="7 18 21">
    <location>
        <position position="85"/>
    </location>
    <ligand>
        <name>fumarate</name>
        <dbReference type="ChEBI" id="CHEBI:29806"/>
    </ligand>
</feature>
<feature type="binding site" evidence="7 8 18 19 20 21 22 23 24 25 26 27 28 29">
    <location>
        <position position="86"/>
    </location>
    <ligand>
        <name>FAD</name>
        <dbReference type="ChEBI" id="CHEBI:57692"/>
    </ligand>
</feature>
<feature type="binding site" evidence="7 8 18 19 20 21 22 23 24 25 26 27 28 29">
    <location>
        <position position="201"/>
    </location>
    <ligand>
        <name>FAD</name>
        <dbReference type="ChEBI" id="CHEBI:57692"/>
    </ligand>
</feature>
<feature type="binding site" evidence="7 8 18 22 23 24 25 26 28 29">
    <location>
        <position position="255"/>
    </location>
    <ligand>
        <name>FAD</name>
        <dbReference type="ChEBI" id="CHEBI:57692"/>
    </ligand>
</feature>
<feature type="binding site" evidence="7 18 21">
    <location>
        <position position="276"/>
    </location>
    <ligand>
        <name>fumarate</name>
        <dbReference type="ChEBI" id="CHEBI:29806"/>
    </ligand>
</feature>
<feature type="binding site" evidence="7 18 21">
    <location>
        <position position="288"/>
    </location>
    <ligand>
        <name>fumarate</name>
        <dbReference type="ChEBI" id="CHEBI:29806"/>
    </ligand>
</feature>
<feature type="binding site" evidence="7 18 21">
    <location>
        <position position="289"/>
    </location>
    <ligand>
        <name>fumarate</name>
        <dbReference type="ChEBI" id="CHEBI:29806"/>
    </ligand>
</feature>
<feature type="binding site" evidence="7 21">
    <location>
        <position position="387"/>
    </location>
    <ligand>
        <name>fumarate</name>
        <dbReference type="ChEBI" id="CHEBI:29806"/>
    </ligand>
</feature>
<feature type="binding site" evidence="7 8 18 19 20 21 22 23 24 25 27 28 29">
    <location>
        <position position="421"/>
    </location>
    <ligand>
        <name>FAD</name>
        <dbReference type="ChEBI" id="CHEBI:57692"/>
    </ligand>
</feature>
<feature type="binding site" evidence="7 18 21">
    <location>
        <position position="432"/>
    </location>
    <ligand>
        <name>FAD</name>
        <dbReference type="ChEBI" id="CHEBI:57692"/>
    </ligand>
</feature>
<feature type="binding site" evidence="7 18 21">
    <location>
        <position position="432"/>
    </location>
    <ligand>
        <name>fumarate</name>
        <dbReference type="ChEBI" id="CHEBI:29806"/>
    </ligand>
</feature>
<feature type="binding site" evidence="7 21">
    <location>
        <position position="435"/>
    </location>
    <ligand>
        <name>fumarate</name>
        <dbReference type="ChEBI" id="CHEBI:29806"/>
    </ligand>
</feature>
<feature type="binding site" evidence="7 8 18 19 20 21 22 23 24 25 26 27 28 29">
    <location>
        <position position="437"/>
    </location>
    <ligand>
        <name>FAD</name>
        <dbReference type="ChEBI" id="CHEBI:57692"/>
    </ligand>
</feature>
<feature type="binding site" evidence="7 8 18 19 20 21 22 23 24 25 26 27 28 29">
    <location>
        <position position="438"/>
    </location>
    <ligand>
        <name>FAD</name>
        <dbReference type="ChEBI" id="CHEBI:57692"/>
    </ligand>
</feature>
<feature type="modified residue" description="Tele-8alpha-FAD histidine" evidence="3 7 18 19 20 21">
    <location>
        <position position="79"/>
    </location>
</feature>
<feature type="sequence conflict" description="In Ref. 2; ADY41782." evidence="15" ref="2">
    <original>S</original>
    <variation>C</variation>
    <location>
        <position position="23"/>
    </location>
</feature>
<feature type="sequence conflict" description="In Ref. 2; ADY41782." evidence="15" ref="2">
    <original>A</original>
    <variation>V</variation>
    <location>
        <position position="107"/>
    </location>
</feature>
<feature type="sequence conflict" description="In Ref. 2; ADY41782." evidence="15" ref="2">
    <original>S</original>
    <variation>F</variation>
    <location>
        <position position="524"/>
    </location>
</feature>
<feature type="strand" evidence="33">
    <location>
        <begin position="37"/>
        <end position="47"/>
    </location>
</feature>
<feature type="helix" evidence="33">
    <location>
        <begin position="51"/>
        <end position="62"/>
    </location>
</feature>
<feature type="strand" evidence="33">
    <location>
        <begin position="67"/>
        <end position="73"/>
    </location>
</feature>
<feature type="helix" evidence="33">
    <location>
        <begin position="75"/>
        <end position="77"/>
    </location>
</feature>
<feature type="helix" evidence="33">
    <location>
        <begin position="79"/>
        <end position="82"/>
    </location>
</feature>
<feature type="strand" evidence="33">
    <location>
        <begin position="93"/>
        <end position="95"/>
    </location>
</feature>
<feature type="helix" evidence="33">
    <location>
        <begin position="99"/>
        <end position="109"/>
    </location>
</feature>
<feature type="turn" evidence="33">
    <location>
        <begin position="110"/>
        <end position="112"/>
    </location>
</feature>
<feature type="helix" evidence="33">
    <location>
        <begin position="116"/>
        <end position="124"/>
    </location>
</feature>
<feature type="helix" evidence="33">
    <location>
        <begin position="126"/>
        <end position="135"/>
    </location>
</feature>
<feature type="strand" evidence="33">
    <location>
        <begin position="146"/>
        <end position="148"/>
    </location>
</feature>
<feature type="strand" evidence="32">
    <location>
        <begin position="150"/>
        <end position="152"/>
    </location>
</feature>
<feature type="helix" evidence="33">
    <location>
        <begin position="159"/>
        <end position="161"/>
    </location>
</feature>
<feature type="strand" evidence="32">
    <location>
        <begin position="167"/>
        <end position="170"/>
    </location>
</feature>
<feature type="helix" evidence="33">
    <location>
        <begin position="176"/>
        <end position="188"/>
    </location>
</feature>
<feature type="helix" evidence="33">
    <location>
        <begin position="189"/>
        <end position="191"/>
    </location>
</feature>
<feature type="strand" evidence="33">
    <location>
        <begin position="194"/>
        <end position="197"/>
    </location>
</feature>
<feature type="strand" evidence="33">
    <location>
        <begin position="199"/>
        <end position="207"/>
    </location>
</feature>
<feature type="strand" evidence="33">
    <location>
        <begin position="210"/>
        <end position="218"/>
    </location>
</feature>
<feature type="turn" evidence="33">
    <location>
        <begin position="219"/>
        <end position="221"/>
    </location>
</feature>
<feature type="strand" evidence="33">
    <location>
        <begin position="224"/>
        <end position="234"/>
    </location>
</feature>
<feature type="helix" evidence="33">
    <location>
        <begin position="240"/>
        <end position="242"/>
    </location>
</feature>
<feature type="strand" evidence="33">
    <location>
        <begin position="243"/>
        <end position="248"/>
    </location>
</feature>
<feature type="helix" evidence="33">
    <location>
        <begin position="255"/>
        <end position="262"/>
    </location>
</feature>
<feature type="strand" evidence="33">
    <location>
        <begin position="273"/>
        <end position="280"/>
    </location>
</feature>
<feature type="turn" evidence="33">
    <location>
        <begin position="281"/>
        <end position="283"/>
    </location>
</feature>
<feature type="helix" evidence="33">
    <location>
        <begin position="290"/>
        <end position="293"/>
    </location>
</feature>
<feature type="strand" evidence="33">
    <location>
        <begin position="297"/>
        <end position="299"/>
    </location>
</feature>
<feature type="strand" evidence="35">
    <location>
        <begin position="301"/>
        <end position="303"/>
    </location>
</feature>
<feature type="helix" evidence="33">
    <location>
        <begin position="307"/>
        <end position="310"/>
    </location>
</feature>
<feature type="turn" evidence="33">
    <location>
        <begin position="312"/>
        <end position="314"/>
    </location>
</feature>
<feature type="helix" evidence="33">
    <location>
        <begin position="315"/>
        <end position="317"/>
    </location>
</feature>
<feature type="helix" evidence="33">
    <location>
        <begin position="320"/>
        <end position="332"/>
    </location>
</feature>
<feature type="turn" evidence="36">
    <location>
        <begin position="333"/>
        <end position="335"/>
    </location>
</feature>
<feature type="turn" evidence="33">
    <location>
        <begin position="338"/>
        <end position="341"/>
    </location>
</feature>
<feature type="strand" evidence="33">
    <location>
        <begin position="343"/>
        <end position="347"/>
    </location>
</feature>
<feature type="helix" evidence="33">
    <location>
        <begin position="353"/>
        <end position="359"/>
    </location>
</feature>
<feature type="helix" evidence="33">
    <location>
        <begin position="361"/>
        <end position="371"/>
    </location>
</feature>
<feature type="turn" evidence="33">
    <location>
        <begin position="375"/>
        <end position="377"/>
    </location>
</feature>
<feature type="strand" evidence="33">
    <location>
        <begin position="380"/>
        <end position="389"/>
    </location>
</feature>
<feature type="strand" evidence="33">
    <location>
        <begin position="392"/>
        <end position="395"/>
    </location>
</feature>
<feature type="strand" evidence="33">
    <location>
        <begin position="400"/>
        <end position="405"/>
    </location>
</feature>
<feature type="turn" evidence="33">
    <location>
        <begin position="406"/>
        <end position="408"/>
    </location>
</feature>
<feature type="strand" evidence="33">
    <location>
        <begin position="409"/>
        <end position="418"/>
    </location>
</feature>
<feature type="helix" evidence="33">
    <location>
        <begin position="420"/>
        <end position="422"/>
    </location>
</feature>
<feature type="strand" evidence="33">
    <location>
        <begin position="423"/>
        <end position="428"/>
    </location>
</feature>
<feature type="helix" evidence="33">
    <location>
        <begin position="437"/>
        <end position="455"/>
    </location>
</feature>
<feature type="strand" evidence="32">
    <location>
        <begin position="458"/>
        <end position="460"/>
    </location>
</feature>
<feature type="turn" evidence="33">
    <location>
        <begin position="467"/>
        <end position="470"/>
    </location>
</feature>
<feature type="helix" evidence="33">
    <location>
        <begin position="471"/>
        <end position="481"/>
    </location>
</feature>
<feature type="strand" evidence="33">
    <location>
        <begin position="484"/>
        <end position="488"/>
    </location>
</feature>
<feature type="helix" evidence="33">
    <location>
        <begin position="489"/>
        <end position="503"/>
    </location>
</feature>
<feature type="strand" evidence="33">
    <location>
        <begin position="504"/>
        <end position="508"/>
    </location>
</feature>
<feature type="helix" evidence="33">
    <location>
        <begin position="510"/>
        <end position="526"/>
    </location>
</feature>
<feature type="helix" evidence="33">
    <location>
        <begin position="527"/>
        <end position="529"/>
    </location>
</feature>
<feature type="strand" evidence="33">
    <location>
        <begin position="537"/>
        <end position="539"/>
    </location>
</feature>
<feature type="helix" evidence="33">
    <location>
        <begin position="541"/>
        <end position="565"/>
    </location>
</feature>
<feature type="strand" evidence="30">
    <location>
        <begin position="568"/>
        <end position="570"/>
    </location>
</feature>
<feature type="strand" evidence="33">
    <location>
        <begin position="573"/>
        <end position="575"/>
    </location>
</feature>
<feature type="turn" evidence="31">
    <location>
        <begin position="587"/>
        <end position="590"/>
    </location>
</feature>
<feature type="strand" evidence="34">
    <location>
        <begin position="591"/>
        <end position="593"/>
    </location>
</feature>
<feature type="turn" evidence="33">
    <location>
        <begin position="599"/>
        <end position="601"/>
    </location>
</feature>
<feature type="strand" evidence="33">
    <location>
        <begin position="605"/>
        <end position="611"/>
    </location>
</feature>
<feature type="turn" evidence="33">
    <location>
        <begin position="613"/>
        <end position="615"/>
    </location>
</feature>
<feature type="strand" evidence="33">
    <location>
        <begin position="618"/>
        <end position="624"/>
    </location>
</feature>
<feature type="turn" evidence="33">
    <location>
        <begin position="632"/>
        <end position="634"/>
    </location>
</feature>
<keyword id="KW-0002">3D-structure</keyword>
<keyword id="KW-0249">Electron transport</keyword>
<keyword id="KW-0274">FAD</keyword>
<keyword id="KW-0285">Flavoprotein</keyword>
<keyword id="KW-0472">Membrane</keyword>
<keyword id="KW-0496">Mitochondrion</keyword>
<keyword id="KW-0999">Mitochondrion inner membrane</keyword>
<keyword id="KW-0547">Nucleotide-binding</keyword>
<keyword id="KW-0560">Oxidoreductase</keyword>
<keyword id="KW-0809">Transit peptide</keyword>
<keyword id="KW-0813">Transport</keyword>